<keyword id="KW-0106">Calcium</keyword>
<keyword id="KW-1015">Disulfide bond</keyword>
<keyword id="KW-0325">Glycoprotein</keyword>
<keyword id="KW-1199">Hemostasis impairing toxin</keyword>
<keyword id="KW-0378">Hydrolase</keyword>
<keyword id="KW-0479">Metal-binding</keyword>
<keyword id="KW-0482">Metalloprotease</keyword>
<keyword id="KW-0645">Protease</keyword>
<keyword id="KW-0964">Secreted</keyword>
<keyword id="KW-0800">Toxin</keyword>
<keyword id="KW-0862">Zinc</keyword>
<accession>A2CJE2</accession>
<reference key="1">
    <citation type="journal article" date="2007" name="Gene">
        <title>Molecular evolution of PIII-SVMP and RGD disintegrin genes from the genus Crotalus.</title>
        <authorList>
            <person name="Soto J.G."/>
            <person name="White S.A."/>
            <person name="Reyes S.R."/>
            <person name="Regalado R."/>
            <person name="Sanchez E.E."/>
            <person name="Perez J.C."/>
        </authorList>
    </citation>
    <scope>NUCLEOTIDE SEQUENCE [MRNA]</scope>
    <source>
        <tissue>Venom gland</tissue>
    </source>
</reference>
<name>VM3S_CROSS</name>
<proteinExistence type="evidence at transcript level"/>
<evidence type="ECO:0000250" key="1"/>
<evidence type="ECO:0000255" key="2">
    <source>
        <dbReference type="PROSITE-ProRule" id="PRU00068"/>
    </source>
</evidence>
<evidence type="ECO:0000305" key="3"/>
<sequence length="177" mass="19578">NPCCDAATCKLKSGSQCGHGDCCEQCKFSKSGTECRASMSECDPAEHCTGQSSECPADVFHKNGQPCLDNYGYCYNGNCPIMYHQCYDLFGADVYEAEDSCFERNQKGNYYGYCRKENGNKIPCAPEDVKCGRLYCKDNSPGQNNPCKMFYSNEDEHKGMVLPGTKCADGKVCSNRQ</sequence>
<feature type="chain" id="PRO_0000406576" description="Zinc metalloproteinase-disintegrin-like scutiarin">
    <location>
        <begin position="1" status="less than"/>
        <end position="177" status="greater than"/>
    </location>
</feature>
<feature type="domain" description="Disintegrin" evidence="2">
    <location>
        <begin position="1" status="less than"/>
        <end position="63"/>
    </location>
</feature>
<feature type="short sequence motif" description="D/ECD-tripeptide">
    <location>
        <begin position="41"/>
        <end position="43"/>
    </location>
</feature>
<feature type="binding site" evidence="1">
    <location>
        <position position="43"/>
    </location>
    <ligand>
        <name>Ca(2+)</name>
        <dbReference type="ChEBI" id="CHEBI:29108"/>
    </ligand>
</feature>
<feature type="binding site" evidence="1">
    <location>
        <position position="44"/>
    </location>
    <ligand>
        <name>Ca(2+)</name>
        <dbReference type="ChEBI" id="CHEBI:29108"/>
    </ligand>
</feature>
<feature type="binding site" evidence="1">
    <location>
        <position position="46"/>
    </location>
    <ligand>
        <name>Ca(2+)</name>
        <dbReference type="ChEBI" id="CHEBI:29108"/>
    </ligand>
</feature>
<feature type="binding site" evidence="1">
    <location>
        <position position="58"/>
    </location>
    <ligand>
        <name>Ca(2+)</name>
        <dbReference type="ChEBI" id="CHEBI:29108"/>
    </ligand>
</feature>
<feature type="binding site" evidence="1">
    <location>
        <position position="59"/>
    </location>
    <ligand>
        <name>Ca(2+)</name>
        <dbReference type="ChEBI" id="CHEBI:29108"/>
    </ligand>
</feature>
<feature type="disulfide bond" evidence="1">
    <location>
        <begin position="3"/>
        <end position="26"/>
    </location>
</feature>
<feature type="disulfide bond" evidence="1">
    <location>
        <begin position="17"/>
        <end position="23"/>
    </location>
</feature>
<feature type="disulfide bond" evidence="1">
    <location>
        <begin position="22"/>
        <end position="48"/>
    </location>
</feature>
<feature type="disulfide bond" evidence="2">
    <location>
        <begin position="35"/>
        <end position="55"/>
    </location>
</feature>
<feature type="disulfide bond" evidence="1">
    <location>
        <begin position="42"/>
        <end position="74"/>
    </location>
</feature>
<feature type="disulfide bond" evidence="1">
    <location>
        <begin position="67"/>
        <end position="79"/>
    </location>
</feature>
<feature type="disulfide bond" evidence="1">
    <location>
        <begin position="86"/>
        <end position="136"/>
    </location>
</feature>
<feature type="disulfide bond" evidence="1">
    <location>
        <begin position="101"/>
        <end position="147"/>
    </location>
</feature>
<feature type="disulfide bond" evidence="1">
    <location>
        <begin position="114"/>
        <end position="124"/>
    </location>
</feature>
<feature type="disulfide bond" evidence="1">
    <location>
        <begin position="131"/>
        <end position="173"/>
    </location>
</feature>
<feature type="non-terminal residue">
    <location>
        <position position="1"/>
    </location>
</feature>
<feature type="non-terminal residue">
    <location>
        <position position="177"/>
    </location>
</feature>
<protein>
    <recommendedName>
        <fullName>Zinc metalloproteinase-disintegrin-like scutiarin</fullName>
        <ecNumber>3.4.24.-</ecNumber>
    </recommendedName>
    <alternativeName>
        <fullName>Snake venom metalloproteinase</fullName>
        <shortName>SVMP</shortName>
    </alternativeName>
</protein>
<organism>
    <name type="scientific">Crotalus scutulatus scutulatus</name>
    <name type="common">Mojave rattlesnake</name>
    <dbReference type="NCBI Taxonomy" id="8738"/>
    <lineage>
        <taxon>Eukaryota</taxon>
        <taxon>Metazoa</taxon>
        <taxon>Chordata</taxon>
        <taxon>Craniata</taxon>
        <taxon>Vertebrata</taxon>
        <taxon>Euteleostomi</taxon>
        <taxon>Lepidosauria</taxon>
        <taxon>Squamata</taxon>
        <taxon>Bifurcata</taxon>
        <taxon>Unidentata</taxon>
        <taxon>Episquamata</taxon>
        <taxon>Toxicofera</taxon>
        <taxon>Serpentes</taxon>
        <taxon>Colubroidea</taxon>
        <taxon>Viperidae</taxon>
        <taxon>Crotalinae</taxon>
        <taxon>Crotalus</taxon>
    </lineage>
</organism>
<comment type="function">
    <text evidence="1">Snake venom metalloproteinase that impairs hemostasis in the envenomed animal.</text>
</comment>
<comment type="cofactor">
    <cofactor evidence="1">
        <name>Zn(2+)</name>
        <dbReference type="ChEBI" id="CHEBI:29105"/>
    </cofactor>
    <text evidence="1">Binds 1 zinc ion per subunit.</text>
</comment>
<comment type="subunit">
    <text evidence="1">Monomer.</text>
</comment>
<comment type="subcellular location">
    <subcellularLocation>
        <location evidence="1">Secreted</location>
    </subcellularLocation>
</comment>
<comment type="tissue specificity">
    <text>Expressed by the venom gland.</text>
</comment>
<comment type="PTM">
    <text evidence="1">Glycosylated.</text>
</comment>
<comment type="similarity">
    <text evidence="3">Belongs to the venom metalloproteinase (M12B) family. P-III subfamily. P-IIIa sub-subfamily.</text>
</comment>
<dbReference type="EC" id="3.4.24.-"/>
<dbReference type="EMBL" id="DQ676499">
    <property type="protein sequence ID" value="ABG77583.1"/>
    <property type="molecule type" value="mRNA"/>
</dbReference>
<dbReference type="SMR" id="A2CJE2"/>
<dbReference type="GO" id="GO:0005576">
    <property type="term" value="C:extracellular region"/>
    <property type="evidence" value="ECO:0007669"/>
    <property type="project" value="UniProtKB-SubCell"/>
</dbReference>
<dbReference type="GO" id="GO:0005886">
    <property type="term" value="C:plasma membrane"/>
    <property type="evidence" value="ECO:0007669"/>
    <property type="project" value="TreeGrafter"/>
</dbReference>
<dbReference type="GO" id="GO:0046872">
    <property type="term" value="F:metal ion binding"/>
    <property type="evidence" value="ECO:0007669"/>
    <property type="project" value="UniProtKB-KW"/>
</dbReference>
<dbReference type="GO" id="GO:0008237">
    <property type="term" value="F:metallopeptidase activity"/>
    <property type="evidence" value="ECO:0007669"/>
    <property type="project" value="UniProtKB-KW"/>
</dbReference>
<dbReference type="GO" id="GO:0090729">
    <property type="term" value="F:toxin activity"/>
    <property type="evidence" value="ECO:0007669"/>
    <property type="project" value="UniProtKB-KW"/>
</dbReference>
<dbReference type="GO" id="GO:0006508">
    <property type="term" value="P:proteolysis"/>
    <property type="evidence" value="ECO:0007669"/>
    <property type="project" value="UniProtKB-KW"/>
</dbReference>
<dbReference type="Gene3D" id="4.10.70.10">
    <property type="entry name" value="Disintegrin domain"/>
    <property type="match status" value="1"/>
</dbReference>
<dbReference type="InterPro" id="IPR006586">
    <property type="entry name" value="ADAM_Cys-rich"/>
</dbReference>
<dbReference type="InterPro" id="IPR018358">
    <property type="entry name" value="Disintegrin_CS"/>
</dbReference>
<dbReference type="InterPro" id="IPR001762">
    <property type="entry name" value="Disintegrin_dom"/>
</dbReference>
<dbReference type="InterPro" id="IPR036436">
    <property type="entry name" value="Disintegrin_dom_sf"/>
</dbReference>
<dbReference type="PANTHER" id="PTHR11905">
    <property type="entry name" value="ADAM A DISINTEGRIN AND METALLOPROTEASE DOMAIN"/>
    <property type="match status" value="1"/>
</dbReference>
<dbReference type="PANTHER" id="PTHR11905:SF32">
    <property type="entry name" value="DISINTEGRIN AND METALLOPROTEINASE DOMAIN-CONTAINING PROTEIN 28"/>
    <property type="match status" value="1"/>
</dbReference>
<dbReference type="Pfam" id="PF08516">
    <property type="entry name" value="ADAM_CR"/>
    <property type="match status" value="1"/>
</dbReference>
<dbReference type="Pfam" id="PF00200">
    <property type="entry name" value="Disintegrin"/>
    <property type="match status" value="1"/>
</dbReference>
<dbReference type="PRINTS" id="PR00289">
    <property type="entry name" value="DISINTEGRIN"/>
</dbReference>
<dbReference type="SMART" id="SM00608">
    <property type="entry name" value="ACR"/>
    <property type="match status" value="1"/>
</dbReference>
<dbReference type="SMART" id="SM00050">
    <property type="entry name" value="DISIN"/>
    <property type="match status" value="1"/>
</dbReference>
<dbReference type="SUPFAM" id="SSF57552">
    <property type="entry name" value="Blood coagulation inhibitor (disintegrin)"/>
    <property type="match status" value="1"/>
</dbReference>
<dbReference type="PROSITE" id="PS00427">
    <property type="entry name" value="DISINTEGRIN_1"/>
    <property type="match status" value="1"/>
</dbReference>
<dbReference type="PROSITE" id="PS50214">
    <property type="entry name" value="DISINTEGRIN_2"/>
    <property type="match status" value="1"/>
</dbReference>